<name>AGRB_STAA1</name>
<protein>
    <recommendedName>
        <fullName evidence="1">Accessory gene regulator protein B</fullName>
        <ecNumber evidence="1">3.4.-.-</ecNumber>
    </recommendedName>
</protein>
<accession>A7X4K2</accession>
<organism>
    <name type="scientific">Staphylococcus aureus (strain Mu3 / ATCC 700698)</name>
    <dbReference type="NCBI Taxonomy" id="418127"/>
    <lineage>
        <taxon>Bacteria</taxon>
        <taxon>Bacillati</taxon>
        <taxon>Bacillota</taxon>
        <taxon>Bacilli</taxon>
        <taxon>Bacillales</taxon>
        <taxon>Staphylococcaceae</taxon>
        <taxon>Staphylococcus</taxon>
    </lineage>
</organism>
<evidence type="ECO:0000255" key="1">
    <source>
        <dbReference type="HAMAP-Rule" id="MF_00784"/>
    </source>
</evidence>
<keyword id="KW-1003">Cell membrane</keyword>
<keyword id="KW-0378">Hydrolase</keyword>
<keyword id="KW-0472">Membrane</keyword>
<keyword id="KW-0645">Protease</keyword>
<keyword id="KW-0673">Quorum sensing</keyword>
<keyword id="KW-0812">Transmembrane</keyword>
<keyword id="KW-1133">Transmembrane helix</keyword>
<keyword id="KW-0843">Virulence</keyword>
<reference key="1">
    <citation type="journal article" date="2008" name="Antimicrob. Agents Chemother.">
        <title>Mutated response regulator graR is responsible for phenotypic conversion of Staphylococcus aureus from heterogeneous vancomycin-intermediate resistance to vancomycin-intermediate resistance.</title>
        <authorList>
            <person name="Neoh H.-M."/>
            <person name="Cui L."/>
            <person name="Yuzawa H."/>
            <person name="Takeuchi F."/>
            <person name="Matsuo M."/>
            <person name="Hiramatsu K."/>
        </authorList>
    </citation>
    <scope>NUCLEOTIDE SEQUENCE [LARGE SCALE GENOMIC DNA]</scope>
    <source>
        <strain>Mu3 / ATCC 700698</strain>
    </source>
</reference>
<proteinExistence type="inferred from homology"/>
<dbReference type="EC" id="3.4.-.-" evidence="1"/>
<dbReference type="EMBL" id="AP009324">
    <property type="protein sequence ID" value="BAF78904.1"/>
    <property type="molecule type" value="Genomic_DNA"/>
</dbReference>
<dbReference type="RefSeq" id="WP_001105696.1">
    <property type="nucleotide sequence ID" value="NC_009782.1"/>
</dbReference>
<dbReference type="MEROPS" id="C75.001"/>
<dbReference type="KEGG" id="saw:SAHV_2021"/>
<dbReference type="HOGENOM" id="CLU_098969_2_2_9"/>
<dbReference type="GO" id="GO:0005886">
    <property type="term" value="C:plasma membrane"/>
    <property type="evidence" value="ECO:0007669"/>
    <property type="project" value="UniProtKB-SubCell"/>
</dbReference>
<dbReference type="GO" id="GO:0008233">
    <property type="term" value="F:peptidase activity"/>
    <property type="evidence" value="ECO:0007669"/>
    <property type="project" value="UniProtKB-UniRule"/>
</dbReference>
<dbReference type="GO" id="GO:0006508">
    <property type="term" value="P:proteolysis"/>
    <property type="evidence" value="ECO:0007669"/>
    <property type="project" value="UniProtKB-KW"/>
</dbReference>
<dbReference type="GO" id="GO:0009372">
    <property type="term" value="P:quorum sensing"/>
    <property type="evidence" value="ECO:0007669"/>
    <property type="project" value="UniProtKB-UniRule"/>
</dbReference>
<dbReference type="HAMAP" id="MF_00784">
    <property type="entry name" value="AgrB"/>
    <property type="match status" value="1"/>
</dbReference>
<dbReference type="InterPro" id="IPR006741">
    <property type="entry name" value="AgrB"/>
</dbReference>
<dbReference type="Pfam" id="PF04647">
    <property type="entry name" value="AgrB"/>
    <property type="match status" value="1"/>
</dbReference>
<dbReference type="SMART" id="SM00793">
    <property type="entry name" value="AgrB"/>
    <property type="match status" value="1"/>
</dbReference>
<sequence>MNYFDNKIDQFATYLQKRNNLDHIQFLQVRLGMQIIVGNFFKILVTYSISIFLSVFLFTLVTHLSYMLIRYNAHGAHAKSSILCYIQSILTFVFVPYFLINIDINFTYLLALSIIGLISVVIYAPAATKKQPIPIKLVKRKKYLSIIMYLLVLILSLIIHPFYAQFMLLGILVESITLLPIFFPKED</sequence>
<comment type="function">
    <text evidence="1">Essential for the production of a quorum sensing system signal molecule, the autoinducing peptide (AIP). This quorum sensing system is responsible for the regulation of the expression of virulence factor genes. Involved in the proteolytic processing of AgrD, the precursor of AIP.</text>
</comment>
<comment type="subcellular location">
    <subcellularLocation>
        <location evidence="1">Cell membrane</location>
        <topology evidence="1">Multi-pass membrane protein</topology>
    </subcellularLocation>
</comment>
<comment type="similarity">
    <text evidence="1">Belongs to the AgrB family.</text>
</comment>
<gene>
    <name evidence="1" type="primary">agrB</name>
    <name type="ordered locus">SAHV_2021</name>
</gene>
<feature type="chain" id="PRO_1000046837" description="Accessory gene regulator protein B">
    <location>
        <begin position="1"/>
        <end position="187"/>
    </location>
</feature>
<feature type="transmembrane region" description="Helical" evidence="1">
    <location>
        <begin position="49"/>
        <end position="69"/>
    </location>
</feature>
<feature type="transmembrane region" description="Helical" evidence="1">
    <location>
        <begin position="82"/>
        <end position="102"/>
    </location>
</feature>
<feature type="transmembrane region" description="Helical" evidence="1">
    <location>
        <begin position="106"/>
        <end position="126"/>
    </location>
</feature>
<feature type="transmembrane region" description="Helical" evidence="1">
    <location>
        <begin position="144"/>
        <end position="164"/>
    </location>
</feature>
<feature type="transmembrane region" description="Helical" evidence="1">
    <location>
        <begin position="166"/>
        <end position="186"/>
    </location>
</feature>